<evidence type="ECO:0000255" key="1">
    <source>
        <dbReference type="HAMAP-Rule" id="MF_01374"/>
    </source>
</evidence>
<name>GLO2_ECOLU</name>
<organism>
    <name type="scientific">Escherichia coli O17:K52:H18 (strain UMN026 / ExPEC)</name>
    <dbReference type="NCBI Taxonomy" id="585056"/>
    <lineage>
        <taxon>Bacteria</taxon>
        <taxon>Pseudomonadati</taxon>
        <taxon>Pseudomonadota</taxon>
        <taxon>Gammaproteobacteria</taxon>
        <taxon>Enterobacterales</taxon>
        <taxon>Enterobacteriaceae</taxon>
        <taxon>Escherichia</taxon>
    </lineage>
</organism>
<protein>
    <recommendedName>
        <fullName evidence="1">Hydroxyacylglutathione hydrolase</fullName>
        <ecNumber evidence="1">3.1.2.6</ecNumber>
    </recommendedName>
    <alternativeName>
        <fullName evidence="1">Glyoxalase II</fullName>
        <shortName evidence="1">Glx II</shortName>
    </alternativeName>
</protein>
<comment type="function">
    <text evidence="1">Thiolesterase that catalyzes the hydrolysis of S-D-lactoyl-glutathione to form glutathione and D-lactic acid.</text>
</comment>
<comment type="catalytic activity">
    <reaction evidence="1">
        <text>an S-(2-hydroxyacyl)glutathione + H2O = a 2-hydroxy carboxylate + glutathione + H(+)</text>
        <dbReference type="Rhea" id="RHEA:21864"/>
        <dbReference type="ChEBI" id="CHEBI:15377"/>
        <dbReference type="ChEBI" id="CHEBI:15378"/>
        <dbReference type="ChEBI" id="CHEBI:57925"/>
        <dbReference type="ChEBI" id="CHEBI:58896"/>
        <dbReference type="ChEBI" id="CHEBI:71261"/>
        <dbReference type="EC" id="3.1.2.6"/>
    </reaction>
</comment>
<comment type="cofactor">
    <cofactor evidence="1">
        <name>Zn(2+)</name>
        <dbReference type="ChEBI" id="CHEBI:29105"/>
    </cofactor>
    <text evidence="1">Binds 2 Zn(2+) ions per subunit.</text>
</comment>
<comment type="pathway">
    <text evidence="1">Secondary metabolite metabolism; methylglyoxal degradation; (R)-lactate from methylglyoxal: step 2/2.</text>
</comment>
<comment type="subunit">
    <text evidence="1">Monomer.</text>
</comment>
<comment type="similarity">
    <text evidence="1">Belongs to the metallo-beta-lactamase superfamily. Glyoxalase II family.</text>
</comment>
<feature type="chain" id="PRO_1000144763" description="Hydroxyacylglutathione hydrolase">
    <location>
        <begin position="1"/>
        <end position="251"/>
    </location>
</feature>
<feature type="binding site" evidence="1">
    <location>
        <position position="53"/>
    </location>
    <ligand>
        <name>Zn(2+)</name>
        <dbReference type="ChEBI" id="CHEBI:29105"/>
        <label>1</label>
    </ligand>
</feature>
<feature type="binding site" evidence="1">
    <location>
        <position position="55"/>
    </location>
    <ligand>
        <name>Zn(2+)</name>
        <dbReference type="ChEBI" id="CHEBI:29105"/>
        <label>1</label>
    </ligand>
</feature>
<feature type="binding site" evidence="1">
    <location>
        <position position="57"/>
    </location>
    <ligand>
        <name>Zn(2+)</name>
        <dbReference type="ChEBI" id="CHEBI:29105"/>
        <label>2</label>
    </ligand>
</feature>
<feature type="binding site" evidence="1">
    <location>
        <position position="58"/>
    </location>
    <ligand>
        <name>Zn(2+)</name>
        <dbReference type="ChEBI" id="CHEBI:29105"/>
        <label>2</label>
    </ligand>
</feature>
<feature type="binding site" evidence="1">
    <location>
        <position position="110"/>
    </location>
    <ligand>
        <name>Zn(2+)</name>
        <dbReference type="ChEBI" id="CHEBI:29105"/>
        <label>1</label>
    </ligand>
</feature>
<feature type="binding site" evidence="1">
    <location>
        <position position="127"/>
    </location>
    <ligand>
        <name>Zn(2+)</name>
        <dbReference type="ChEBI" id="CHEBI:29105"/>
        <label>1</label>
    </ligand>
</feature>
<feature type="binding site" evidence="1">
    <location>
        <position position="127"/>
    </location>
    <ligand>
        <name>Zn(2+)</name>
        <dbReference type="ChEBI" id="CHEBI:29105"/>
        <label>2</label>
    </ligand>
</feature>
<feature type="binding site" evidence="1">
    <location>
        <position position="165"/>
    </location>
    <ligand>
        <name>Zn(2+)</name>
        <dbReference type="ChEBI" id="CHEBI:29105"/>
        <label>2</label>
    </ligand>
</feature>
<proteinExistence type="inferred from homology"/>
<gene>
    <name evidence="1" type="primary">gloB</name>
    <name type="ordered locus">ECUMN_0209</name>
</gene>
<dbReference type="EC" id="3.1.2.6" evidence="1"/>
<dbReference type="EMBL" id="CU928163">
    <property type="protein sequence ID" value="CAR11424.1"/>
    <property type="molecule type" value="Genomic_DNA"/>
</dbReference>
<dbReference type="RefSeq" id="WP_001052736.1">
    <property type="nucleotide sequence ID" value="NC_011751.1"/>
</dbReference>
<dbReference type="RefSeq" id="YP_002410980.1">
    <property type="nucleotide sequence ID" value="NC_011751.1"/>
</dbReference>
<dbReference type="SMR" id="B7N874"/>
<dbReference type="STRING" id="585056.ECUMN_0209"/>
<dbReference type="KEGG" id="eum:ECUMN_0209"/>
<dbReference type="PATRIC" id="fig|585056.7.peg.398"/>
<dbReference type="HOGENOM" id="CLU_030571_4_1_6"/>
<dbReference type="UniPathway" id="UPA00619">
    <property type="reaction ID" value="UER00676"/>
</dbReference>
<dbReference type="Proteomes" id="UP000007097">
    <property type="component" value="Chromosome"/>
</dbReference>
<dbReference type="GO" id="GO:0004416">
    <property type="term" value="F:hydroxyacylglutathione hydrolase activity"/>
    <property type="evidence" value="ECO:0007669"/>
    <property type="project" value="UniProtKB-UniRule"/>
</dbReference>
<dbReference type="GO" id="GO:0046872">
    <property type="term" value="F:metal ion binding"/>
    <property type="evidence" value="ECO:0007669"/>
    <property type="project" value="UniProtKB-KW"/>
</dbReference>
<dbReference type="GO" id="GO:0019243">
    <property type="term" value="P:methylglyoxal catabolic process to D-lactate via S-lactoyl-glutathione"/>
    <property type="evidence" value="ECO:0007669"/>
    <property type="project" value="InterPro"/>
</dbReference>
<dbReference type="CDD" id="cd07723">
    <property type="entry name" value="hydroxyacylglutathione_hydrolase_MBL-fold"/>
    <property type="match status" value="1"/>
</dbReference>
<dbReference type="FunFam" id="3.60.15.10:FF:000012">
    <property type="entry name" value="Hydroxyacylglutathione hydrolase"/>
    <property type="match status" value="1"/>
</dbReference>
<dbReference type="Gene3D" id="3.60.15.10">
    <property type="entry name" value="Ribonuclease Z/Hydroxyacylglutathione hydrolase-like"/>
    <property type="match status" value="1"/>
</dbReference>
<dbReference type="HAMAP" id="MF_01374">
    <property type="entry name" value="Glyoxalase_2"/>
    <property type="match status" value="1"/>
</dbReference>
<dbReference type="InterPro" id="IPR035680">
    <property type="entry name" value="Clx_II_MBL"/>
</dbReference>
<dbReference type="InterPro" id="IPR050110">
    <property type="entry name" value="Glyoxalase_II_hydrolase"/>
</dbReference>
<dbReference type="InterPro" id="IPR032282">
    <property type="entry name" value="HAGH_C"/>
</dbReference>
<dbReference type="InterPro" id="IPR017782">
    <property type="entry name" value="Hydroxyacylglutathione_Hdrlase"/>
</dbReference>
<dbReference type="InterPro" id="IPR001279">
    <property type="entry name" value="Metallo-B-lactamas"/>
</dbReference>
<dbReference type="InterPro" id="IPR036866">
    <property type="entry name" value="RibonucZ/Hydroxyglut_hydro"/>
</dbReference>
<dbReference type="NCBIfam" id="TIGR03413">
    <property type="entry name" value="GSH_gloB"/>
    <property type="match status" value="1"/>
</dbReference>
<dbReference type="NCBIfam" id="NF007597">
    <property type="entry name" value="PRK10241.1"/>
    <property type="match status" value="1"/>
</dbReference>
<dbReference type="PANTHER" id="PTHR43705">
    <property type="entry name" value="HYDROXYACYLGLUTATHIONE HYDROLASE"/>
    <property type="match status" value="1"/>
</dbReference>
<dbReference type="PANTHER" id="PTHR43705:SF1">
    <property type="entry name" value="HYDROXYACYLGLUTATHIONE HYDROLASE GLOB"/>
    <property type="match status" value="1"/>
</dbReference>
<dbReference type="Pfam" id="PF16123">
    <property type="entry name" value="HAGH_C"/>
    <property type="match status" value="1"/>
</dbReference>
<dbReference type="Pfam" id="PF00753">
    <property type="entry name" value="Lactamase_B"/>
    <property type="match status" value="1"/>
</dbReference>
<dbReference type="PIRSF" id="PIRSF005457">
    <property type="entry name" value="Glx"/>
    <property type="match status" value="1"/>
</dbReference>
<dbReference type="SMART" id="SM00849">
    <property type="entry name" value="Lactamase_B"/>
    <property type="match status" value="1"/>
</dbReference>
<dbReference type="SUPFAM" id="SSF56281">
    <property type="entry name" value="Metallo-hydrolase/oxidoreductase"/>
    <property type="match status" value="1"/>
</dbReference>
<accession>B7N874</accession>
<sequence length="251" mass="28500">MNLNSIPAFDDNYIWVLNDEAGRCLIVDPGDAEPVLNAIAANNWQPEAIFLTHHHHDHVGGVKELVKKFPQIVVYGPQETQDKGTTRVVKDGEIAFVLGHEFSVIATPGHTLGHICYFSKPYLFCGDTLFSGGCGRLFEGTPSQMYQSLKKLSALPDDTLVCCAHEYTLSNMKFALSILPHDLSINDYYRKVKELRAKNQITLPVILKNERQINVFLRTEDIDLINVINEETLLQQPEERFAWLRSKKDRF</sequence>
<keyword id="KW-0378">Hydrolase</keyword>
<keyword id="KW-0479">Metal-binding</keyword>
<keyword id="KW-0862">Zinc</keyword>
<reference key="1">
    <citation type="journal article" date="2009" name="PLoS Genet.">
        <title>Organised genome dynamics in the Escherichia coli species results in highly diverse adaptive paths.</title>
        <authorList>
            <person name="Touchon M."/>
            <person name="Hoede C."/>
            <person name="Tenaillon O."/>
            <person name="Barbe V."/>
            <person name="Baeriswyl S."/>
            <person name="Bidet P."/>
            <person name="Bingen E."/>
            <person name="Bonacorsi S."/>
            <person name="Bouchier C."/>
            <person name="Bouvet O."/>
            <person name="Calteau A."/>
            <person name="Chiapello H."/>
            <person name="Clermont O."/>
            <person name="Cruveiller S."/>
            <person name="Danchin A."/>
            <person name="Diard M."/>
            <person name="Dossat C."/>
            <person name="Karoui M.E."/>
            <person name="Frapy E."/>
            <person name="Garry L."/>
            <person name="Ghigo J.M."/>
            <person name="Gilles A.M."/>
            <person name="Johnson J."/>
            <person name="Le Bouguenec C."/>
            <person name="Lescat M."/>
            <person name="Mangenot S."/>
            <person name="Martinez-Jehanne V."/>
            <person name="Matic I."/>
            <person name="Nassif X."/>
            <person name="Oztas S."/>
            <person name="Petit M.A."/>
            <person name="Pichon C."/>
            <person name="Rouy Z."/>
            <person name="Ruf C.S."/>
            <person name="Schneider D."/>
            <person name="Tourret J."/>
            <person name="Vacherie B."/>
            <person name="Vallenet D."/>
            <person name="Medigue C."/>
            <person name="Rocha E.P.C."/>
            <person name="Denamur E."/>
        </authorList>
    </citation>
    <scope>NUCLEOTIDE SEQUENCE [LARGE SCALE GENOMIC DNA]</scope>
    <source>
        <strain>UMN026 / ExPEC</strain>
    </source>
</reference>